<feature type="chain" id="PRO_1000005131" description="Small ribosomal subunit protein bS21">
    <location>
        <begin position="1"/>
        <end position="69"/>
    </location>
</feature>
<feature type="region of interest" description="Disordered" evidence="2">
    <location>
        <begin position="49"/>
        <end position="69"/>
    </location>
</feature>
<accession>Q04T16</accession>
<proteinExistence type="inferred from homology"/>
<sequence>MVGIIVKDGESIESALKRFKRDCANAGIMSEIKRREYFEKPSIKKKKAIESAKRKAEKKKRLFSKKDKA</sequence>
<evidence type="ECO:0000255" key="1">
    <source>
        <dbReference type="HAMAP-Rule" id="MF_00358"/>
    </source>
</evidence>
<evidence type="ECO:0000256" key="2">
    <source>
        <dbReference type="SAM" id="MobiDB-lite"/>
    </source>
</evidence>
<evidence type="ECO:0000305" key="3"/>
<comment type="similarity">
    <text evidence="1">Belongs to the bacterial ribosomal protein bS21 family.</text>
</comment>
<name>RS21_LEPBJ</name>
<dbReference type="EMBL" id="CP000350">
    <property type="protein sequence ID" value="ABJ75954.1"/>
    <property type="molecule type" value="Genomic_DNA"/>
</dbReference>
<dbReference type="RefSeq" id="WP_000232823.1">
    <property type="nucleotide sequence ID" value="NC_008510.1"/>
</dbReference>
<dbReference type="SMR" id="Q04T16"/>
<dbReference type="GeneID" id="61174136"/>
<dbReference type="KEGG" id="lbj:LBJ_1373"/>
<dbReference type="HOGENOM" id="CLU_159258_1_2_12"/>
<dbReference type="Proteomes" id="UP000000656">
    <property type="component" value="Chromosome 1"/>
</dbReference>
<dbReference type="GO" id="GO:1990904">
    <property type="term" value="C:ribonucleoprotein complex"/>
    <property type="evidence" value="ECO:0007669"/>
    <property type="project" value="UniProtKB-KW"/>
</dbReference>
<dbReference type="GO" id="GO:0005840">
    <property type="term" value="C:ribosome"/>
    <property type="evidence" value="ECO:0007669"/>
    <property type="project" value="UniProtKB-KW"/>
</dbReference>
<dbReference type="GO" id="GO:0003735">
    <property type="term" value="F:structural constituent of ribosome"/>
    <property type="evidence" value="ECO:0007669"/>
    <property type="project" value="InterPro"/>
</dbReference>
<dbReference type="GO" id="GO:0006412">
    <property type="term" value="P:translation"/>
    <property type="evidence" value="ECO:0007669"/>
    <property type="project" value="UniProtKB-UniRule"/>
</dbReference>
<dbReference type="Gene3D" id="1.20.5.1150">
    <property type="entry name" value="Ribosomal protein S8"/>
    <property type="match status" value="1"/>
</dbReference>
<dbReference type="HAMAP" id="MF_00358">
    <property type="entry name" value="Ribosomal_bS21"/>
    <property type="match status" value="1"/>
</dbReference>
<dbReference type="InterPro" id="IPR001911">
    <property type="entry name" value="Ribosomal_bS21"/>
</dbReference>
<dbReference type="InterPro" id="IPR038380">
    <property type="entry name" value="Ribosomal_bS21_sf"/>
</dbReference>
<dbReference type="NCBIfam" id="TIGR00030">
    <property type="entry name" value="S21p"/>
    <property type="match status" value="1"/>
</dbReference>
<dbReference type="PANTHER" id="PTHR21109">
    <property type="entry name" value="MITOCHONDRIAL 28S RIBOSOMAL PROTEIN S21"/>
    <property type="match status" value="1"/>
</dbReference>
<dbReference type="PANTHER" id="PTHR21109:SF22">
    <property type="entry name" value="SMALL RIBOSOMAL SUBUNIT PROTEIN BS21"/>
    <property type="match status" value="1"/>
</dbReference>
<dbReference type="Pfam" id="PF01165">
    <property type="entry name" value="Ribosomal_S21"/>
    <property type="match status" value="1"/>
</dbReference>
<dbReference type="PRINTS" id="PR00976">
    <property type="entry name" value="RIBOSOMALS21"/>
</dbReference>
<gene>
    <name evidence="1" type="primary">rpsU</name>
    <name type="ordered locus">LBJ_1373</name>
</gene>
<reference key="1">
    <citation type="journal article" date="2006" name="Proc. Natl. Acad. Sci. U.S.A.">
        <title>Genome reduction in Leptospira borgpetersenii reflects limited transmission potential.</title>
        <authorList>
            <person name="Bulach D.M."/>
            <person name="Zuerner R.L."/>
            <person name="Wilson P."/>
            <person name="Seemann T."/>
            <person name="McGrath A."/>
            <person name="Cullen P.A."/>
            <person name="Davis J."/>
            <person name="Johnson M."/>
            <person name="Kuczek E."/>
            <person name="Alt D.P."/>
            <person name="Peterson-Burch B."/>
            <person name="Coppel R.L."/>
            <person name="Rood J.I."/>
            <person name="Davies J.K."/>
            <person name="Adler B."/>
        </authorList>
    </citation>
    <scope>NUCLEOTIDE SEQUENCE [LARGE SCALE GENOMIC DNA]</scope>
    <source>
        <strain>JB197</strain>
    </source>
</reference>
<protein>
    <recommendedName>
        <fullName evidence="1">Small ribosomal subunit protein bS21</fullName>
    </recommendedName>
    <alternativeName>
        <fullName evidence="3">30S ribosomal protein S21</fullName>
    </alternativeName>
</protein>
<organism>
    <name type="scientific">Leptospira borgpetersenii serovar Hardjo-bovis (strain JB197)</name>
    <dbReference type="NCBI Taxonomy" id="355277"/>
    <lineage>
        <taxon>Bacteria</taxon>
        <taxon>Pseudomonadati</taxon>
        <taxon>Spirochaetota</taxon>
        <taxon>Spirochaetia</taxon>
        <taxon>Leptospirales</taxon>
        <taxon>Leptospiraceae</taxon>
        <taxon>Leptospira</taxon>
    </lineage>
</organism>
<keyword id="KW-0687">Ribonucleoprotein</keyword>
<keyword id="KW-0689">Ribosomal protein</keyword>